<gene>
    <name evidence="1" type="primary">rsd</name>
    <name type="ordered locus">ECP_4208</name>
</gene>
<proteinExistence type="inferred from homology"/>
<feature type="chain" id="PRO_0000268883" description="Regulator of sigma D">
    <location>
        <begin position="1"/>
        <end position="158"/>
    </location>
</feature>
<reference key="1">
    <citation type="journal article" date="2006" name="Mol. Microbiol.">
        <title>Role of pathogenicity island-associated integrases in the genome plasticity of uropathogenic Escherichia coli strain 536.</title>
        <authorList>
            <person name="Hochhut B."/>
            <person name="Wilde C."/>
            <person name="Balling G."/>
            <person name="Middendorf B."/>
            <person name="Dobrindt U."/>
            <person name="Brzuszkiewicz E."/>
            <person name="Gottschalk G."/>
            <person name="Carniel E."/>
            <person name="Hacker J."/>
        </authorList>
    </citation>
    <scope>NUCLEOTIDE SEQUENCE [LARGE SCALE GENOMIC DNA]</scope>
    <source>
        <strain>536 / UPEC</strain>
    </source>
</reference>
<keyword id="KW-0963">Cytoplasm</keyword>
<keyword id="KW-0804">Transcription</keyword>
<keyword id="KW-0805">Transcription regulation</keyword>
<accession>Q0TA70</accession>
<name>RSD_ECOL5</name>
<protein>
    <recommendedName>
        <fullName evidence="1">Regulator of sigma D</fullName>
    </recommendedName>
</protein>
<organism>
    <name type="scientific">Escherichia coli O6:K15:H31 (strain 536 / UPEC)</name>
    <dbReference type="NCBI Taxonomy" id="362663"/>
    <lineage>
        <taxon>Bacteria</taxon>
        <taxon>Pseudomonadati</taxon>
        <taxon>Pseudomonadota</taxon>
        <taxon>Gammaproteobacteria</taxon>
        <taxon>Enterobacterales</taxon>
        <taxon>Enterobacteriaceae</taxon>
        <taxon>Escherichia</taxon>
    </lineage>
</organism>
<dbReference type="EMBL" id="CP000247">
    <property type="protein sequence ID" value="ABG72159.1"/>
    <property type="molecule type" value="Genomic_DNA"/>
</dbReference>
<dbReference type="RefSeq" id="WP_000934300.1">
    <property type="nucleotide sequence ID" value="NC_008253.1"/>
</dbReference>
<dbReference type="SMR" id="Q0TA70"/>
<dbReference type="KEGG" id="ecp:ECP_4208"/>
<dbReference type="HOGENOM" id="CLU_142729_0_0_6"/>
<dbReference type="Proteomes" id="UP000009182">
    <property type="component" value="Chromosome"/>
</dbReference>
<dbReference type="GO" id="GO:0005737">
    <property type="term" value="C:cytoplasm"/>
    <property type="evidence" value="ECO:0007669"/>
    <property type="project" value="UniProtKB-SubCell"/>
</dbReference>
<dbReference type="GO" id="GO:0006355">
    <property type="term" value="P:regulation of DNA-templated transcription"/>
    <property type="evidence" value="ECO:0007669"/>
    <property type="project" value="InterPro"/>
</dbReference>
<dbReference type="FunFam" id="1.20.120.1370:FF:000001">
    <property type="entry name" value="Regulator of sigma D"/>
    <property type="match status" value="1"/>
</dbReference>
<dbReference type="Gene3D" id="1.20.120.1370">
    <property type="entry name" value="Regulator of RNA polymerase sigma(70) subunit, domain 4"/>
    <property type="match status" value="1"/>
</dbReference>
<dbReference type="HAMAP" id="MF_01181">
    <property type="entry name" value="Rsd"/>
    <property type="match status" value="1"/>
</dbReference>
<dbReference type="InterPro" id="IPR038309">
    <property type="entry name" value="Rsd/AlgQ_sf"/>
</dbReference>
<dbReference type="InterPro" id="IPR023785">
    <property type="entry name" value="Sigma70_reg_Rsd"/>
</dbReference>
<dbReference type="InterPro" id="IPR007448">
    <property type="entry name" value="Sigma70_reg_Rsd_AlgQ"/>
</dbReference>
<dbReference type="NCBIfam" id="NF008723">
    <property type="entry name" value="PRK11718.1"/>
    <property type="match status" value="1"/>
</dbReference>
<dbReference type="Pfam" id="PF04353">
    <property type="entry name" value="Rsd_AlgQ"/>
    <property type="match status" value="1"/>
</dbReference>
<dbReference type="PIRSF" id="PIRSF016548">
    <property type="entry name" value="Rsd_AlgQ"/>
    <property type="match status" value="1"/>
</dbReference>
<comment type="function">
    <text evidence="1">Binds RpoD and negatively regulates RpoD-mediated transcription activation by preventing the interaction between the primary sigma factor RpoD with the catalytic core of the RNA polymerase and with promoter DNA. May be involved in replacement of the RNA polymerase sigma subunit from RpoD to RpoS during the transition from exponential growth to the stationary phase.</text>
</comment>
<comment type="subunit">
    <text evidence="1">Interacts with RpoD.</text>
</comment>
<comment type="subcellular location">
    <subcellularLocation>
        <location evidence="1">Cytoplasm</location>
    </subcellularLocation>
</comment>
<comment type="similarity">
    <text evidence="1">Belongs to the Rsd/AlgQ family.</text>
</comment>
<evidence type="ECO:0000255" key="1">
    <source>
        <dbReference type="HAMAP-Rule" id="MF_01181"/>
    </source>
</evidence>
<sequence length="158" mass="18221">MLNQLDNLTERVRGSNKLVDRWLHVRKHLLVAYYNLVGIKPGKESYMRLNEKALDDFCQSLVDYLSAGHFSIYERILHKLEGNGQLARAAKIWPQLEANTQQIMDDYDSSLETAIDHDNYLEFQQVLSDIGEALEARFVLEDKLILLVLDAARVKYPA</sequence>